<proteinExistence type="inferred from homology"/>
<protein>
    <recommendedName>
        <fullName evidence="1">DNA polymerase III PolC-type</fullName>
        <shortName evidence="1">PolIII</shortName>
        <ecNumber evidence="1">2.7.7.7</ecNumber>
    </recommendedName>
</protein>
<accession>P0C0B8</accession>
<accession>Q48WI5</accession>
<accession>Q9FDF9</accession>
<gene>
    <name evidence="1" type="primary">polC</name>
    <name type="ordered locus">SPy_1961</name>
    <name type="ordered locus">M5005_Spy1672</name>
</gene>
<reference key="1">
    <citation type="journal article" date="2001" name="Proc. Natl. Acad. Sci. U.S.A.">
        <title>Complete genome sequence of an M1 strain of Streptococcus pyogenes.</title>
        <authorList>
            <person name="Ferretti J.J."/>
            <person name="McShan W.M."/>
            <person name="Ajdic D.J."/>
            <person name="Savic D.J."/>
            <person name="Savic G."/>
            <person name="Lyon K."/>
            <person name="Primeaux C."/>
            <person name="Sezate S."/>
            <person name="Suvorov A.N."/>
            <person name="Kenton S."/>
            <person name="Lai H.S."/>
            <person name="Lin S.P."/>
            <person name="Qian Y."/>
            <person name="Jia H.G."/>
            <person name="Najar F.Z."/>
            <person name="Ren Q."/>
            <person name="Zhu H."/>
            <person name="Song L."/>
            <person name="White J."/>
            <person name="Yuan X."/>
            <person name="Clifton S.W."/>
            <person name="Roe B.A."/>
            <person name="McLaughlin R.E."/>
        </authorList>
    </citation>
    <scope>NUCLEOTIDE SEQUENCE [LARGE SCALE GENOMIC DNA]</scope>
    <source>
        <strain>ATCC 700294 / SF370 / Serotype M1</strain>
    </source>
</reference>
<reference key="2">
    <citation type="journal article" date="2005" name="J. Infect. Dis.">
        <title>Evolutionary origin and emergence of a highly successful clone of serotype M1 group A Streptococcus involved multiple horizontal gene transfer events.</title>
        <authorList>
            <person name="Sumby P."/>
            <person name="Porcella S.F."/>
            <person name="Madrigal A.G."/>
            <person name="Barbian K.D."/>
            <person name="Virtaneva K."/>
            <person name="Ricklefs S.M."/>
            <person name="Sturdevant D.E."/>
            <person name="Graham M.R."/>
            <person name="Vuopio-Varkila J."/>
            <person name="Hoe N.P."/>
            <person name="Musser J.M."/>
        </authorList>
    </citation>
    <scope>NUCLEOTIDE SEQUENCE [LARGE SCALE GENOMIC DNA]</scope>
    <source>
        <strain>ATCC BAA-947 / MGAS5005 / Serotype M1</strain>
    </source>
</reference>
<dbReference type="EC" id="2.7.7.7" evidence="1"/>
<dbReference type="EMBL" id="AE004092">
    <property type="protein sequence ID" value="AAK34654.1"/>
    <property type="molecule type" value="Genomic_DNA"/>
</dbReference>
<dbReference type="EMBL" id="CP000017">
    <property type="protein sequence ID" value="AAZ52290.1"/>
    <property type="molecule type" value="Genomic_DNA"/>
</dbReference>
<dbReference type="RefSeq" id="NP_269933.1">
    <property type="nucleotide sequence ID" value="NC_002737.2"/>
</dbReference>
<dbReference type="SMR" id="P0C0B8"/>
<dbReference type="PaxDb" id="1314-HKU360_01789"/>
<dbReference type="KEGG" id="spy:SPy_1961"/>
<dbReference type="KEGG" id="spz:M5005_Spy1672"/>
<dbReference type="PATRIC" id="fig|160490.10.peg.1708"/>
<dbReference type="HOGENOM" id="CLU_003297_2_0_9"/>
<dbReference type="OMA" id="QGCTGVK"/>
<dbReference type="Proteomes" id="UP000000750">
    <property type="component" value="Chromosome"/>
</dbReference>
<dbReference type="GO" id="GO:0005737">
    <property type="term" value="C:cytoplasm"/>
    <property type="evidence" value="ECO:0007669"/>
    <property type="project" value="UniProtKB-SubCell"/>
</dbReference>
<dbReference type="GO" id="GO:0008408">
    <property type="term" value="F:3'-5' exonuclease activity"/>
    <property type="evidence" value="ECO:0007669"/>
    <property type="project" value="UniProtKB-UniRule"/>
</dbReference>
<dbReference type="GO" id="GO:0003677">
    <property type="term" value="F:DNA binding"/>
    <property type="evidence" value="ECO:0007669"/>
    <property type="project" value="UniProtKB-UniRule"/>
</dbReference>
<dbReference type="GO" id="GO:0003887">
    <property type="term" value="F:DNA-directed DNA polymerase activity"/>
    <property type="evidence" value="ECO:0007669"/>
    <property type="project" value="UniProtKB-UniRule"/>
</dbReference>
<dbReference type="GO" id="GO:0006261">
    <property type="term" value="P:DNA-templated DNA replication"/>
    <property type="evidence" value="ECO:0007669"/>
    <property type="project" value="UniProtKB-UniRule"/>
</dbReference>
<dbReference type="CDD" id="cd06127">
    <property type="entry name" value="DEDDh"/>
    <property type="match status" value="1"/>
</dbReference>
<dbReference type="CDD" id="cd07435">
    <property type="entry name" value="PHP_PolIIIA_POLC"/>
    <property type="match status" value="1"/>
</dbReference>
<dbReference type="CDD" id="cd04484">
    <property type="entry name" value="polC_OBF"/>
    <property type="match status" value="1"/>
</dbReference>
<dbReference type="FunFam" id="3.30.420.10:FF:000045">
    <property type="entry name" value="3'-5' exonuclease DinG"/>
    <property type="match status" value="1"/>
</dbReference>
<dbReference type="Gene3D" id="1.10.150.870">
    <property type="match status" value="1"/>
</dbReference>
<dbReference type="Gene3D" id="3.30.1900.20">
    <property type="match status" value="1"/>
</dbReference>
<dbReference type="Gene3D" id="6.10.140.1510">
    <property type="match status" value="1"/>
</dbReference>
<dbReference type="Gene3D" id="3.20.20.140">
    <property type="entry name" value="Metal-dependent hydrolases"/>
    <property type="match status" value="1"/>
</dbReference>
<dbReference type="Gene3D" id="2.40.50.140">
    <property type="entry name" value="Nucleic acid-binding proteins"/>
    <property type="match status" value="1"/>
</dbReference>
<dbReference type="Gene3D" id="1.10.150.700">
    <property type="entry name" value="PolC, middle finger domain"/>
    <property type="match status" value="1"/>
</dbReference>
<dbReference type="Gene3D" id="3.30.420.10">
    <property type="entry name" value="Ribonuclease H-like superfamily/Ribonuclease H"/>
    <property type="match status" value="1"/>
</dbReference>
<dbReference type="HAMAP" id="MF_00356">
    <property type="entry name" value="DNApol_PolC"/>
    <property type="match status" value="1"/>
</dbReference>
<dbReference type="InterPro" id="IPR011708">
    <property type="entry name" value="DNA_pol3_alpha_NTPase_dom"/>
</dbReference>
<dbReference type="InterPro" id="IPR040982">
    <property type="entry name" value="DNA_pol3_finger"/>
</dbReference>
<dbReference type="InterPro" id="IPR024754">
    <property type="entry name" value="DNA_PolC-like_N_II"/>
</dbReference>
<dbReference type="InterPro" id="IPR028112">
    <property type="entry name" value="DNA_PolC-type_N_I"/>
</dbReference>
<dbReference type="InterPro" id="IPR004805">
    <property type="entry name" value="DnaE2/DnaE/PolC"/>
</dbReference>
<dbReference type="InterPro" id="IPR029460">
    <property type="entry name" value="DNAPol_HHH"/>
</dbReference>
<dbReference type="InterPro" id="IPR006054">
    <property type="entry name" value="DnaQ"/>
</dbReference>
<dbReference type="InterPro" id="IPR013520">
    <property type="entry name" value="Exonuclease_RNaseT/DNA_pol3"/>
</dbReference>
<dbReference type="InterPro" id="IPR012340">
    <property type="entry name" value="NA-bd_OB-fold"/>
</dbReference>
<dbReference type="InterPro" id="IPR004013">
    <property type="entry name" value="PHP_dom"/>
</dbReference>
<dbReference type="InterPro" id="IPR003141">
    <property type="entry name" value="Pol/His_phosphatase_N"/>
</dbReference>
<dbReference type="InterPro" id="IPR016195">
    <property type="entry name" value="Pol/histidinol_Pase-like"/>
</dbReference>
<dbReference type="InterPro" id="IPR006308">
    <property type="entry name" value="Pol_III_a_PolC-type_gram_pos"/>
</dbReference>
<dbReference type="InterPro" id="IPR044923">
    <property type="entry name" value="PolC_middle_finger_sf"/>
</dbReference>
<dbReference type="InterPro" id="IPR012337">
    <property type="entry name" value="RNaseH-like_sf"/>
</dbReference>
<dbReference type="InterPro" id="IPR036397">
    <property type="entry name" value="RNaseH_sf"/>
</dbReference>
<dbReference type="NCBIfam" id="TIGR00573">
    <property type="entry name" value="dnaq"/>
    <property type="match status" value="1"/>
</dbReference>
<dbReference type="NCBIfam" id="TIGR01405">
    <property type="entry name" value="polC_Gram_pos"/>
    <property type="match status" value="1"/>
</dbReference>
<dbReference type="NCBIfam" id="NF001688">
    <property type="entry name" value="PRK00448.1"/>
    <property type="match status" value="1"/>
</dbReference>
<dbReference type="PANTHER" id="PTHR32294:SF5">
    <property type="entry name" value="DNA POLYMERASE III POLC-TYPE"/>
    <property type="match status" value="1"/>
</dbReference>
<dbReference type="PANTHER" id="PTHR32294">
    <property type="entry name" value="DNA POLYMERASE III SUBUNIT ALPHA"/>
    <property type="match status" value="1"/>
</dbReference>
<dbReference type="Pfam" id="PF14480">
    <property type="entry name" value="DNA_pol3_a_NI"/>
    <property type="match status" value="1"/>
</dbReference>
<dbReference type="Pfam" id="PF11490">
    <property type="entry name" value="DNA_pol3_a_NII"/>
    <property type="match status" value="1"/>
</dbReference>
<dbReference type="Pfam" id="PF07733">
    <property type="entry name" value="DNA_pol3_alpha"/>
    <property type="match status" value="2"/>
</dbReference>
<dbReference type="Pfam" id="PF17657">
    <property type="entry name" value="DNA_pol3_finger"/>
    <property type="match status" value="1"/>
</dbReference>
<dbReference type="Pfam" id="PF14579">
    <property type="entry name" value="HHH_6"/>
    <property type="match status" value="1"/>
</dbReference>
<dbReference type="Pfam" id="PF02811">
    <property type="entry name" value="PHP"/>
    <property type="match status" value="2"/>
</dbReference>
<dbReference type="Pfam" id="PF00929">
    <property type="entry name" value="RNase_T"/>
    <property type="match status" value="1"/>
</dbReference>
<dbReference type="SMART" id="SM00479">
    <property type="entry name" value="EXOIII"/>
    <property type="match status" value="1"/>
</dbReference>
<dbReference type="SMART" id="SM00481">
    <property type="entry name" value="POLIIIAc"/>
    <property type="match status" value="1"/>
</dbReference>
<dbReference type="SUPFAM" id="SSF50249">
    <property type="entry name" value="Nucleic acid-binding proteins"/>
    <property type="match status" value="1"/>
</dbReference>
<dbReference type="SUPFAM" id="SSF89550">
    <property type="entry name" value="PHP domain-like"/>
    <property type="match status" value="1"/>
</dbReference>
<dbReference type="SUPFAM" id="SSF53098">
    <property type="entry name" value="Ribonuclease H-like"/>
    <property type="match status" value="1"/>
</dbReference>
<name>DPO3_STRP1</name>
<organism>
    <name type="scientific">Streptococcus pyogenes serotype M1</name>
    <dbReference type="NCBI Taxonomy" id="301447"/>
    <lineage>
        <taxon>Bacteria</taxon>
        <taxon>Bacillati</taxon>
        <taxon>Bacillota</taxon>
        <taxon>Bacilli</taxon>
        <taxon>Lactobacillales</taxon>
        <taxon>Streptococcaceae</taxon>
        <taxon>Streptococcus</taxon>
    </lineage>
</organism>
<sequence length="1465" mass="164668">MSDLFAKLMDQIEMPLDMRRSSAFSSADIIEVKVHSVSRLWEFHFAFAAVLPIATYRELHDRLIRTFEAADIKVTFDIQAAQVDYSDDLLQAYYQEAFEHAPCNSASFKSSFSKLKVTYEDDKLIIAAPGFVNNDHFRNNHLPNLVKQLEAFGFGILTIDMVSDQEMTEHLTKNFVSSRQALVKKAVQDNLEAQKSLEAMMPPVEEATPAPKFDYKERAAKRQAGFEKATITPMIEIETEENRIVFEGMVFDVERKTTRTGRHIINFKMTDYTSSFALQKWAKDDEELRKFDMIAKGAWLRVQGNIETNPFTKSLTMNVQQVKEIVRHERKDLMPEGQKRVELHAHTNMSTMDALPTVESLIDTAAKWGHKAIAITDHANVQSFPHGYHRARKAGIKAIFGLEANIVEDKVPISYEPVDMDLHEATYVVFDVETTGLSAMNNDLIQIAASKMFKGNIVEQFDEFIDPGHPLSAFTTELTGITDKHLQGAKPLVTVLKAFQDFCKDSILVAHNASFDVGFMNANYERHDLPKITQPVIDTLEFARNLYPEYKRHGLGPLTKRFQVSLDHHHMANYDAEATGRLLFIFLKDAREKHGIKNLLQLNTDLVAEDSYKKARIKHATIYVQNQVGLKNMFKLVSLSNIKYFEGVPRIPRTVLDAHREGLLLGTACSDGEVFDAVLTKGIDAAVDLARYYDFIEIMPPAIYQPLVVRELIKDQAGIEQVIRDLIEVGKRAKKPVLATGNVHYLEPEEEIYREIIVRSLGQGAMINRTIGRGEGAQPAPLPKAHFRTTNEMLDEFAFLGKDLAYQVVVQNTQDFADRIEEVEVVKGDLYTPYIDKAEETVAELTYQKAFEIYGNPLPDIIDLRIEKELTSILGNGFAVIYLASQMLVNRSNERGYLVGSRGSVGSSFVATMIGITEVNPMPPHYVCPSCQHSEFITDGSVGSGYDLPNKPCPKCGTPYQKDGQDIPFETFLGFDGDKVPDIDLNFSGDDQPSAHLDVRDIFGDEYAFRAGTVGTVAEKTAYGFVKGYERDYGKFYRDAEVDRLAAGAAGVKRTTGQHPGGIVVIPNYMDVYDFTPVQYPADDVTASWQTTHFNFHDIDENVLKLDILGHDDPTMIRKLQDLSGIDPITIPADDPGVMALFSGTEVLGVTPEQIGTPTGMLGIPEFGTNFVRGMVNETHPTTFAELLQLSGLSHGTDVWLGNAQDLIKEGIATLKTVIGCRDDIMVYLMHAGLEPKMAFTIMERVRKGLWLKISEEERNGYIDAMRENNVPDWYIESCGKIKYMFPKAHAAAYVLMALRVAYFKVHHPIMYYCAYFSIRAKAFELKTMSGGLDAVKARMEDITIKRKNNEATNVENDLFTTLEIVNEMLERGFKFGKLDLYKSDAIEFQIKGDTLIPPFIALEGLGENVAKQIVKARQEGEFLSKMELRKRGGASSTLVEKMDEMGILGNMPEDNQLSLFDDFF</sequence>
<keyword id="KW-0963">Cytoplasm</keyword>
<keyword id="KW-0235">DNA replication</keyword>
<keyword id="KW-0239">DNA-directed DNA polymerase</keyword>
<keyword id="KW-0269">Exonuclease</keyword>
<keyword id="KW-0378">Hydrolase</keyword>
<keyword id="KW-0540">Nuclease</keyword>
<keyword id="KW-0548">Nucleotidyltransferase</keyword>
<keyword id="KW-1185">Reference proteome</keyword>
<keyword id="KW-0808">Transferase</keyword>
<feature type="chain" id="PRO_0000204601" description="DNA polymerase III PolC-type">
    <location>
        <begin position="1"/>
        <end position="1465"/>
    </location>
</feature>
<feature type="domain" description="Exonuclease">
    <location>
        <begin position="427"/>
        <end position="583"/>
    </location>
</feature>
<feature type="sequence conflict" description="In Ref. 2; AAZ52290." evidence="2" ref="2">
    <original>I</original>
    <variation>T</variation>
    <location>
        <position position="156"/>
    </location>
</feature>
<comment type="function">
    <text evidence="1">Required for replicative DNA synthesis. This DNA polymerase also exhibits 3' to 5' exonuclease activity.</text>
</comment>
<comment type="catalytic activity">
    <reaction evidence="1">
        <text>DNA(n) + a 2'-deoxyribonucleoside 5'-triphosphate = DNA(n+1) + diphosphate</text>
        <dbReference type="Rhea" id="RHEA:22508"/>
        <dbReference type="Rhea" id="RHEA-COMP:17339"/>
        <dbReference type="Rhea" id="RHEA-COMP:17340"/>
        <dbReference type="ChEBI" id="CHEBI:33019"/>
        <dbReference type="ChEBI" id="CHEBI:61560"/>
        <dbReference type="ChEBI" id="CHEBI:173112"/>
        <dbReference type="EC" id="2.7.7.7"/>
    </reaction>
</comment>
<comment type="subcellular location">
    <subcellularLocation>
        <location evidence="1">Cytoplasm</location>
    </subcellularLocation>
</comment>
<comment type="similarity">
    <text evidence="1">Belongs to the DNA polymerase type-C family. PolC subfamily.</text>
</comment>
<evidence type="ECO:0000255" key="1">
    <source>
        <dbReference type="HAMAP-Rule" id="MF_00356"/>
    </source>
</evidence>
<evidence type="ECO:0000305" key="2"/>